<name>CH10_ECOLU</name>
<accession>B7NG80</accession>
<keyword id="KW-0143">Chaperone</keyword>
<keyword id="KW-0963">Cytoplasm</keyword>
<reference key="1">
    <citation type="journal article" date="2009" name="PLoS Genet.">
        <title>Organised genome dynamics in the Escherichia coli species results in highly diverse adaptive paths.</title>
        <authorList>
            <person name="Touchon M."/>
            <person name="Hoede C."/>
            <person name="Tenaillon O."/>
            <person name="Barbe V."/>
            <person name="Baeriswyl S."/>
            <person name="Bidet P."/>
            <person name="Bingen E."/>
            <person name="Bonacorsi S."/>
            <person name="Bouchier C."/>
            <person name="Bouvet O."/>
            <person name="Calteau A."/>
            <person name="Chiapello H."/>
            <person name="Clermont O."/>
            <person name="Cruveiller S."/>
            <person name="Danchin A."/>
            <person name="Diard M."/>
            <person name="Dossat C."/>
            <person name="Karoui M.E."/>
            <person name="Frapy E."/>
            <person name="Garry L."/>
            <person name="Ghigo J.M."/>
            <person name="Gilles A.M."/>
            <person name="Johnson J."/>
            <person name="Le Bouguenec C."/>
            <person name="Lescat M."/>
            <person name="Mangenot S."/>
            <person name="Martinez-Jehanne V."/>
            <person name="Matic I."/>
            <person name="Nassif X."/>
            <person name="Oztas S."/>
            <person name="Petit M.A."/>
            <person name="Pichon C."/>
            <person name="Rouy Z."/>
            <person name="Ruf C.S."/>
            <person name="Schneider D."/>
            <person name="Tourret J."/>
            <person name="Vacherie B."/>
            <person name="Vallenet D."/>
            <person name="Medigue C."/>
            <person name="Rocha E.P.C."/>
            <person name="Denamur E."/>
        </authorList>
    </citation>
    <scope>NUCLEOTIDE SEQUENCE [LARGE SCALE GENOMIC DNA]</scope>
    <source>
        <strain>UMN026 / ExPEC</strain>
    </source>
</reference>
<dbReference type="EMBL" id="CU928163">
    <property type="protein sequence ID" value="CAR15792.1"/>
    <property type="molecule type" value="Genomic_DNA"/>
</dbReference>
<dbReference type="RefSeq" id="WP_001026276.1">
    <property type="nucleotide sequence ID" value="NC_011751.1"/>
</dbReference>
<dbReference type="RefSeq" id="YP_002415276.1">
    <property type="nucleotide sequence ID" value="NC_011751.1"/>
</dbReference>
<dbReference type="SMR" id="B7NG80"/>
<dbReference type="STRING" id="585056.ECUMN_4677"/>
<dbReference type="KEGG" id="eum:ECUMN_4677"/>
<dbReference type="PATRIC" id="fig|585056.7.peg.4841"/>
<dbReference type="HOGENOM" id="CLU_132825_1_1_6"/>
<dbReference type="Proteomes" id="UP000007097">
    <property type="component" value="Chromosome"/>
</dbReference>
<dbReference type="GO" id="GO:0005737">
    <property type="term" value="C:cytoplasm"/>
    <property type="evidence" value="ECO:0007669"/>
    <property type="project" value="UniProtKB-SubCell"/>
</dbReference>
<dbReference type="GO" id="GO:0005524">
    <property type="term" value="F:ATP binding"/>
    <property type="evidence" value="ECO:0007669"/>
    <property type="project" value="InterPro"/>
</dbReference>
<dbReference type="GO" id="GO:0046872">
    <property type="term" value="F:metal ion binding"/>
    <property type="evidence" value="ECO:0007669"/>
    <property type="project" value="TreeGrafter"/>
</dbReference>
<dbReference type="GO" id="GO:0044183">
    <property type="term" value="F:protein folding chaperone"/>
    <property type="evidence" value="ECO:0007669"/>
    <property type="project" value="InterPro"/>
</dbReference>
<dbReference type="GO" id="GO:0051087">
    <property type="term" value="F:protein-folding chaperone binding"/>
    <property type="evidence" value="ECO:0007669"/>
    <property type="project" value="TreeGrafter"/>
</dbReference>
<dbReference type="GO" id="GO:0051082">
    <property type="term" value="F:unfolded protein binding"/>
    <property type="evidence" value="ECO:0007669"/>
    <property type="project" value="TreeGrafter"/>
</dbReference>
<dbReference type="GO" id="GO:0051085">
    <property type="term" value="P:chaperone cofactor-dependent protein refolding"/>
    <property type="evidence" value="ECO:0007669"/>
    <property type="project" value="TreeGrafter"/>
</dbReference>
<dbReference type="CDD" id="cd00320">
    <property type="entry name" value="cpn10"/>
    <property type="match status" value="1"/>
</dbReference>
<dbReference type="FunFam" id="2.30.33.40:FF:000001">
    <property type="entry name" value="10 kDa chaperonin"/>
    <property type="match status" value="1"/>
</dbReference>
<dbReference type="Gene3D" id="2.30.33.40">
    <property type="entry name" value="GroES chaperonin"/>
    <property type="match status" value="1"/>
</dbReference>
<dbReference type="HAMAP" id="MF_00580">
    <property type="entry name" value="CH10"/>
    <property type="match status" value="1"/>
</dbReference>
<dbReference type="InterPro" id="IPR020818">
    <property type="entry name" value="Chaperonin_GroES"/>
</dbReference>
<dbReference type="InterPro" id="IPR037124">
    <property type="entry name" value="Chaperonin_GroES_sf"/>
</dbReference>
<dbReference type="InterPro" id="IPR018369">
    <property type="entry name" value="Chaprnonin_Cpn10_CS"/>
</dbReference>
<dbReference type="InterPro" id="IPR011032">
    <property type="entry name" value="GroES-like_sf"/>
</dbReference>
<dbReference type="NCBIfam" id="NF001526">
    <property type="entry name" value="PRK00364.1-1"/>
    <property type="match status" value="1"/>
</dbReference>
<dbReference type="NCBIfam" id="NF001527">
    <property type="entry name" value="PRK00364.1-2"/>
    <property type="match status" value="1"/>
</dbReference>
<dbReference type="NCBIfam" id="NF001531">
    <property type="entry name" value="PRK00364.2-2"/>
    <property type="match status" value="1"/>
</dbReference>
<dbReference type="PANTHER" id="PTHR10772">
    <property type="entry name" value="10 KDA HEAT SHOCK PROTEIN"/>
    <property type="match status" value="1"/>
</dbReference>
<dbReference type="PANTHER" id="PTHR10772:SF58">
    <property type="entry name" value="CO-CHAPERONIN GROES"/>
    <property type="match status" value="1"/>
</dbReference>
<dbReference type="Pfam" id="PF00166">
    <property type="entry name" value="Cpn10"/>
    <property type="match status" value="1"/>
</dbReference>
<dbReference type="PRINTS" id="PR00297">
    <property type="entry name" value="CHAPERONIN10"/>
</dbReference>
<dbReference type="SMART" id="SM00883">
    <property type="entry name" value="Cpn10"/>
    <property type="match status" value="1"/>
</dbReference>
<dbReference type="SUPFAM" id="SSF50129">
    <property type="entry name" value="GroES-like"/>
    <property type="match status" value="1"/>
</dbReference>
<dbReference type="PROSITE" id="PS00681">
    <property type="entry name" value="CHAPERONINS_CPN10"/>
    <property type="match status" value="1"/>
</dbReference>
<gene>
    <name evidence="1" type="primary">groES</name>
    <name evidence="1" type="synonym">groS</name>
    <name type="ordered locus">ECUMN_4677</name>
</gene>
<sequence length="97" mass="10387">MNIRPLHDRVIVKRKEVETKSAGGIVLTGSAAAKSTRGEVLAVGNGRILENGEVKPLDVKVGDIVIFNDGYGVKSEKIDNEEVLIMSESDILAIVEA</sequence>
<protein>
    <recommendedName>
        <fullName evidence="1">Co-chaperonin GroES</fullName>
    </recommendedName>
    <alternativeName>
        <fullName evidence="1">10 kDa chaperonin</fullName>
    </alternativeName>
    <alternativeName>
        <fullName evidence="1">Chaperonin-10</fullName>
        <shortName evidence="1">Cpn10</shortName>
    </alternativeName>
</protein>
<organism>
    <name type="scientific">Escherichia coli O17:K52:H18 (strain UMN026 / ExPEC)</name>
    <dbReference type="NCBI Taxonomy" id="585056"/>
    <lineage>
        <taxon>Bacteria</taxon>
        <taxon>Pseudomonadati</taxon>
        <taxon>Pseudomonadota</taxon>
        <taxon>Gammaproteobacteria</taxon>
        <taxon>Enterobacterales</taxon>
        <taxon>Enterobacteriaceae</taxon>
        <taxon>Escherichia</taxon>
    </lineage>
</organism>
<feature type="chain" id="PRO_1000129656" description="Co-chaperonin GroES">
    <location>
        <begin position="1"/>
        <end position="97"/>
    </location>
</feature>
<proteinExistence type="inferred from homology"/>
<comment type="function">
    <text evidence="1">Together with the chaperonin GroEL, plays an essential role in assisting protein folding. The GroEL-GroES system forms a nano-cage that allows encapsulation of the non-native substrate proteins and provides a physical environment optimized to promote and accelerate protein folding. GroES binds to the apical surface of the GroEL ring, thereby capping the opening of the GroEL channel.</text>
</comment>
<comment type="subunit">
    <text evidence="1">Heptamer of 7 subunits arranged in a ring. Interacts with the chaperonin GroEL.</text>
</comment>
<comment type="subcellular location">
    <subcellularLocation>
        <location evidence="1">Cytoplasm</location>
    </subcellularLocation>
</comment>
<comment type="similarity">
    <text evidence="1">Belongs to the GroES chaperonin family.</text>
</comment>
<evidence type="ECO:0000255" key="1">
    <source>
        <dbReference type="HAMAP-Rule" id="MF_00580"/>
    </source>
</evidence>